<name>TMPB_LEICA</name>
<proteinExistence type="evidence at protein level"/>
<sequence>MSKPDVSKLNRGNIVEFIGGIFDRRGDEEYLGEPVTMAEHMLQGATIAEQNGQPEEIIVGALLHDIGHFTSEFGMFSMDDTEDRYHEEAGAEVLEQFFPSVITDCVRYHVAAKRYLCATKPEYFNRLSEASIHSLKLQGGPMDAEEVAEFEKNPNLKQIIAVRYLDEAGKRADMETPDYWHFAPMVQRMVDKHMGA</sequence>
<evidence type="ECO:0000255" key="1">
    <source>
        <dbReference type="PROSITE-ProRule" id="PRU01175"/>
    </source>
</evidence>
<evidence type="ECO:0000269" key="2">
    <source>
    </source>
</evidence>
<evidence type="ECO:0000303" key="3">
    <source>
    </source>
</evidence>
<evidence type="ECO:0000305" key="4"/>
<evidence type="ECO:0007744" key="5">
    <source>
        <dbReference type="PDB" id="6NPA"/>
    </source>
</evidence>
<evidence type="ECO:0007829" key="6">
    <source>
        <dbReference type="PDB" id="6NPA"/>
    </source>
</evidence>
<protein>
    <recommendedName>
        <fullName evidence="4">[1-hydroxy-2-(trimethylamino)ethyl]phosphonate dioxygenase (glycine-betaine-forming)</fullName>
        <ecNumber evidence="2">1.13.11.90</ecNumber>
    </recommendedName>
</protein>
<accession>A0A4V8H040</accession>
<dbReference type="EC" id="1.13.11.90" evidence="2"/>
<dbReference type="PDB" id="6NPA">
    <property type="method" value="X-ray"/>
    <property type="resolution" value="1.73 A"/>
    <property type="chains" value="A/B/C/D=1-196"/>
</dbReference>
<dbReference type="PDBsum" id="6NPA"/>
<dbReference type="SMR" id="A0A4V8H040"/>
<dbReference type="BioCyc" id="MetaCyc:MONOMER-21118"/>
<dbReference type="BRENDA" id="1.13.11.90">
    <property type="organism ID" value="17142"/>
</dbReference>
<dbReference type="GO" id="GO:0046872">
    <property type="term" value="F:metal ion binding"/>
    <property type="evidence" value="ECO:0007669"/>
    <property type="project" value="UniProtKB-KW"/>
</dbReference>
<dbReference type="GO" id="GO:0016491">
    <property type="term" value="F:oxidoreductase activity"/>
    <property type="evidence" value="ECO:0007669"/>
    <property type="project" value="UniProtKB-KW"/>
</dbReference>
<dbReference type="CDD" id="cd00077">
    <property type="entry name" value="HDc"/>
    <property type="match status" value="1"/>
</dbReference>
<dbReference type="Gene3D" id="1.10.3210.10">
    <property type="entry name" value="Hypothetical protein af1432"/>
    <property type="match status" value="1"/>
</dbReference>
<dbReference type="InterPro" id="IPR003607">
    <property type="entry name" value="HD/PDEase_dom"/>
</dbReference>
<dbReference type="InterPro" id="IPR006674">
    <property type="entry name" value="HD_domain"/>
</dbReference>
<dbReference type="InterPro" id="IPR052567">
    <property type="entry name" value="OP_Dioxygenase"/>
</dbReference>
<dbReference type="PANTHER" id="PTHR40202">
    <property type="match status" value="1"/>
</dbReference>
<dbReference type="PANTHER" id="PTHR40202:SF1">
    <property type="entry name" value="HD DOMAIN-CONTAINING PROTEIN"/>
    <property type="match status" value="1"/>
</dbReference>
<dbReference type="Pfam" id="PF01966">
    <property type="entry name" value="HD"/>
    <property type="match status" value="1"/>
</dbReference>
<dbReference type="SUPFAM" id="SSF109604">
    <property type="entry name" value="HD-domain/PDEase-like"/>
    <property type="match status" value="1"/>
</dbReference>
<keyword id="KW-0002">3D-structure</keyword>
<keyword id="KW-0408">Iron</keyword>
<keyword id="KW-0479">Metal-binding</keyword>
<keyword id="KW-0560">Oxidoreductase</keyword>
<gene>
    <name evidence="3" type="primary">tmpB</name>
</gene>
<comment type="function">
    <text evidence="2">Involved in the degradation of the naturally occurring organophosphonate 2-(trimethylammonio)ethylphosphonate (TMAEP) (PubMed:30789718). Catalyzes the O(2)-dependent cleavage of (R)-1-hydroxy-2-(trimethylammonio)ethylphosphonate (OH-TMAEP) to yield glycine betaine and phosphate (PubMed:30789718). Is highly specific for its N-trimethylated substrate (PubMed:30789718).</text>
</comment>
<comment type="catalytic activity">
    <reaction evidence="2">
        <text>[(1R)-1-hydroxy-2-(trimethylamino)ethyl]phosphonate + O2 = glycine betaine + phosphate + 2 H(+)</text>
        <dbReference type="Rhea" id="RHEA:63192"/>
        <dbReference type="ChEBI" id="CHEBI:15378"/>
        <dbReference type="ChEBI" id="CHEBI:15379"/>
        <dbReference type="ChEBI" id="CHEBI:17750"/>
        <dbReference type="ChEBI" id="CHEBI:43474"/>
        <dbReference type="ChEBI" id="CHEBI:149626"/>
        <dbReference type="EC" id="1.13.11.90"/>
    </reaction>
    <physiologicalReaction direction="left-to-right" evidence="2">
        <dbReference type="Rhea" id="RHEA:63193"/>
    </physiologicalReaction>
</comment>
<comment type="cofactor">
    <cofactor evidence="2">
        <name>Fe cation</name>
        <dbReference type="ChEBI" id="CHEBI:24875"/>
    </cofactor>
    <text evidence="2">Binds 2 iron ions per subunit. During catalysis, TmpB uses a mixed-valent Fe(2+)/Fe(3+) cofactor.</text>
</comment>
<organism>
    <name type="scientific">Leisingera caerulea</name>
    <name type="common">Phaeobacter caeruleus</name>
    <dbReference type="NCBI Taxonomy" id="506591"/>
    <lineage>
        <taxon>Bacteria</taxon>
        <taxon>Pseudomonadati</taxon>
        <taxon>Pseudomonadota</taxon>
        <taxon>Alphaproteobacteria</taxon>
        <taxon>Rhodobacterales</taxon>
        <taxon>Roseobacteraceae</taxon>
        <taxon>Leisingera</taxon>
    </lineage>
</organism>
<reference evidence="5" key="1">
    <citation type="journal article" date="2019" name="Biochemistry">
        <title>A new microbial pathway for organophosphonate degradation catalyzed by two previously misannotated non-heme-iron oxygenases.</title>
        <authorList>
            <person name="Rajakovich L.J."/>
            <person name="Pandelia M.E."/>
            <person name="Mitchell A.J."/>
            <person name="Chang W.C."/>
            <person name="Zhang B."/>
            <person name="Boal A.K."/>
            <person name="Krebs C."/>
            <person name="Bollinger J.M. Jr."/>
        </authorList>
    </citation>
    <scope>X-RAY CRYSTALLOGRAPHY (1.73 ANGSTROMS) IN COMPLEX WITH IRON AND OH-TMAEP</scope>
    <scope>FUNCTION</scope>
    <scope>CATALYTIC ACTIVITY</scope>
    <scope>COFACTOR</scope>
</reference>
<feature type="chain" id="PRO_0000457768" description="[1-hydroxy-2-(trimethylamino)ethyl]phosphonate dioxygenase (glycine-betaine-forming)">
    <location>
        <begin position="1"/>
        <end position="196"/>
    </location>
</feature>
<feature type="domain" description="HD" evidence="1">
    <location>
        <begin position="37"/>
        <end position="156"/>
    </location>
</feature>
<feature type="binding site" evidence="2 5">
    <location>
        <position position="30"/>
    </location>
    <ligand>
        <name>[(1R)-1-hydroxy-2-(trimethylamino)ethyl]phosphonate</name>
        <dbReference type="ChEBI" id="CHEBI:149626"/>
    </ligand>
</feature>
<feature type="binding site" evidence="2 5">
    <location>
        <position position="30"/>
    </location>
    <ligand>
        <name>Fe cation</name>
        <dbReference type="ChEBI" id="CHEBI:24875"/>
        <label>1</label>
    </ligand>
</feature>
<feature type="binding site" evidence="2 5">
    <location>
        <position position="40"/>
    </location>
    <ligand>
        <name>Fe cation</name>
        <dbReference type="ChEBI" id="CHEBI:24875"/>
        <label>1</label>
    </ligand>
</feature>
<feature type="binding site" evidence="2 5">
    <location>
        <position position="64"/>
    </location>
    <ligand>
        <name>Fe cation</name>
        <dbReference type="ChEBI" id="CHEBI:24875"/>
        <label>1</label>
    </ligand>
</feature>
<feature type="binding site" evidence="2 5">
    <location>
        <position position="65"/>
    </location>
    <ligand>
        <name>Fe cation</name>
        <dbReference type="ChEBI" id="CHEBI:24875"/>
        <label>1</label>
    </ligand>
</feature>
<feature type="binding site" evidence="2 5">
    <location>
        <position position="65"/>
    </location>
    <ligand>
        <name>Fe cation</name>
        <dbReference type="ChEBI" id="CHEBI:24875"/>
        <label>2</label>
    </ligand>
</feature>
<feature type="binding site" evidence="2 5">
    <location>
        <position position="68"/>
    </location>
    <ligand>
        <name>[(1R)-1-hydroxy-2-(trimethylamino)ethyl]phosphonate</name>
        <dbReference type="ChEBI" id="CHEBI:149626"/>
    </ligand>
</feature>
<feature type="binding site" evidence="2 5">
    <location>
        <position position="86"/>
    </location>
    <ligand>
        <name>[(1R)-1-hydroxy-2-(trimethylamino)ethyl]phosphonate</name>
        <dbReference type="ChEBI" id="CHEBI:149626"/>
    </ligand>
</feature>
<feature type="binding site" evidence="2 5">
    <location>
        <position position="86"/>
    </location>
    <ligand>
        <name>Fe cation</name>
        <dbReference type="ChEBI" id="CHEBI:24875"/>
        <label>2</label>
    </ligand>
</feature>
<feature type="binding site" evidence="2 5">
    <location>
        <position position="109"/>
    </location>
    <ligand>
        <name>[(1R)-1-hydroxy-2-(trimethylamino)ethyl]phosphonate</name>
        <dbReference type="ChEBI" id="CHEBI:149626"/>
    </ligand>
</feature>
<feature type="binding site" evidence="2 5">
    <location>
        <position position="109"/>
    </location>
    <ligand>
        <name>Fe cation</name>
        <dbReference type="ChEBI" id="CHEBI:24875"/>
        <label>2</label>
    </ligand>
</feature>
<feature type="binding site" evidence="2 5">
    <location>
        <position position="113"/>
    </location>
    <ligand>
        <name>[(1R)-1-hydroxy-2-(trimethylamino)ethyl]phosphonate</name>
        <dbReference type="ChEBI" id="CHEBI:149626"/>
    </ligand>
</feature>
<feature type="binding site" evidence="2 5">
    <location>
        <position position="131"/>
    </location>
    <ligand>
        <name>[(1R)-1-hydroxy-2-(trimethylamino)ethyl]phosphonate</name>
        <dbReference type="ChEBI" id="CHEBI:149626"/>
    </ligand>
</feature>
<feature type="binding site" evidence="2 5">
    <location>
        <position position="134"/>
    </location>
    <ligand>
        <name>[(1R)-1-hydroxy-2-(trimethylamino)ethyl]phosphonate</name>
        <dbReference type="ChEBI" id="CHEBI:149626"/>
    </ligand>
</feature>
<feature type="binding site" evidence="2 5">
    <location>
        <position position="163"/>
    </location>
    <ligand>
        <name>[(1R)-1-hydroxy-2-(trimethylamino)ethyl]phosphonate</name>
        <dbReference type="ChEBI" id="CHEBI:149626"/>
    </ligand>
</feature>
<feature type="binding site" evidence="2 5">
    <location>
        <position position="166"/>
    </location>
    <ligand>
        <name>Fe cation</name>
        <dbReference type="ChEBI" id="CHEBI:24875"/>
        <label>1</label>
    </ligand>
</feature>
<feature type="turn" evidence="6">
    <location>
        <begin position="11"/>
        <end position="13"/>
    </location>
</feature>
<feature type="helix" evidence="6">
    <location>
        <begin position="14"/>
        <end position="25"/>
    </location>
</feature>
<feature type="strand" evidence="6">
    <location>
        <begin position="33"/>
        <end position="36"/>
    </location>
</feature>
<feature type="helix" evidence="6">
    <location>
        <begin position="37"/>
        <end position="50"/>
    </location>
</feature>
<feature type="helix" evidence="6">
    <location>
        <begin position="55"/>
        <end position="63"/>
    </location>
</feature>
<feature type="helix" evidence="6">
    <location>
        <begin position="66"/>
        <end position="68"/>
    </location>
</feature>
<feature type="helix" evidence="6">
    <location>
        <begin position="70"/>
        <end position="72"/>
    </location>
</feature>
<feature type="helix" evidence="6">
    <location>
        <begin position="74"/>
        <end position="76"/>
    </location>
</feature>
<feature type="helix" evidence="6">
    <location>
        <begin position="81"/>
        <end position="84"/>
    </location>
</feature>
<feature type="helix" evidence="6">
    <location>
        <begin position="86"/>
        <end position="94"/>
    </location>
</feature>
<feature type="turn" evidence="6">
    <location>
        <begin position="95"/>
        <end position="97"/>
    </location>
</feature>
<feature type="helix" evidence="6">
    <location>
        <begin position="100"/>
        <end position="107"/>
    </location>
</feature>
<feature type="helix" evidence="6">
    <location>
        <begin position="109"/>
        <end position="119"/>
    </location>
</feature>
<feature type="turn" evidence="6">
    <location>
        <begin position="121"/>
        <end position="123"/>
    </location>
</feature>
<feature type="helix" evidence="6">
    <location>
        <begin position="124"/>
        <end position="126"/>
    </location>
</feature>
<feature type="helix" evidence="6">
    <location>
        <begin position="129"/>
        <end position="137"/>
    </location>
</feature>
<feature type="helix" evidence="6">
    <location>
        <begin position="144"/>
        <end position="150"/>
    </location>
</feature>
<feature type="helix" evidence="6">
    <location>
        <begin position="156"/>
        <end position="168"/>
    </location>
</feature>
<feature type="helix" evidence="6">
    <location>
        <begin position="179"/>
        <end position="194"/>
    </location>
</feature>